<feature type="chain" id="PRO_0000232617" description="Small ribosomal subunit protein uS17">
    <location>
        <begin position="1"/>
        <end position="114"/>
    </location>
</feature>
<dbReference type="EMBL" id="CP000077">
    <property type="protein sequence ID" value="AAY79980.1"/>
    <property type="molecule type" value="Genomic_DNA"/>
</dbReference>
<dbReference type="RefSeq" id="WP_015385458.1">
    <property type="nucleotide sequence ID" value="NC_007181.1"/>
</dbReference>
<dbReference type="PDB" id="8HKX">
    <property type="method" value="EM"/>
    <property type="resolution" value="3.14 A"/>
    <property type="chains" value="S17P=3-113"/>
</dbReference>
<dbReference type="PDB" id="8HKY">
    <property type="method" value="EM"/>
    <property type="resolution" value="4.45 A"/>
    <property type="chains" value="S17P=3-113"/>
</dbReference>
<dbReference type="PDB" id="8HKZ">
    <property type="method" value="EM"/>
    <property type="resolution" value="4.78 A"/>
    <property type="chains" value="S17P=3-113"/>
</dbReference>
<dbReference type="PDB" id="8HL1">
    <property type="method" value="EM"/>
    <property type="resolution" value="3.93 A"/>
    <property type="chains" value="S17P=3-113"/>
</dbReference>
<dbReference type="PDB" id="8HL2">
    <property type="method" value="EM"/>
    <property type="resolution" value="4.10 A"/>
    <property type="chains" value="S17P=3-113"/>
</dbReference>
<dbReference type="PDB" id="8HL3">
    <property type="method" value="EM"/>
    <property type="resolution" value="4.80 A"/>
    <property type="chains" value="S17P=3-113"/>
</dbReference>
<dbReference type="PDB" id="8HL4">
    <property type="method" value="EM"/>
    <property type="resolution" value="4.62 A"/>
    <property type="chains" value="S17P=3-113"/>
</dbReference>
<dbReference type="PDB" id="8HL5">
    <property type="method" value="EM"/>
    <property type="resolution" value="5.72 A"/>
    <property type="chains" value="S17P=3-113"/>
</dbReference>
<dbReference type="PDB" id="8WKP">
    <property type="method" value="EM"/>
    <property type="resolution" value="4.62 A"/>
    <property type="chains" value="S17P=3-113"/>
</dbReference>
<dbReference type="PDB" id="8WQ2">
    <property type="method" value="EM"/>
    <property type="resolution" value="4.10 A"/>
    <property type="chains" value="S17P=3-113"/>
</dbReference>
<dbReference type="PDB" id="8WQ4">
    <property type="method" value="EM"/>
    <property type="resolution" value="4.53 A"/>
    <property type="chains" value="S17P=3-113"/>
</dbReference>
<dbReference type="PDBsum" id="8HKX"/>
<dbReference type="PDBsum" id="8HKY"/>
<dbReference type="PDBsum" id="8HKZ"/>
<dbReference type="PDBsum" id="8HL1"/>
<dbReference type="PDBsum" id="8HL2"/>
<dbReference type="PDBsum" id="8HL3"/>
<dbReference type="PDBsum" id="8HL4"/>
<dbReference type="PDBsum" id="8HL5"/>
<dbReference type="PDBsum" id="8WKP"/>
<dbReference type="PDBsum" id="8WQ2"/>
<dbReference type="PDBsum" id="8WQ4"/>
<dbReference type="EMDB" id="EMD-34862"/>
<dbReference type="EMDB" id="EMD-34863"/>
<dbReference type="EMDB" id="EMD-34864"/>
<dbReference type="EMDB" id="EMD-34866"/>
<dbReference type="EMDB" id="EMD-34867"/>
<dbReference type="EMDB" id="EMD-34868"/>
<dbReference type="EMDB" id="EMD-34869"/>
<dbReference type="EMDB" id="EMD-34870"/>
<dbReference type="EMDB" id="EMD-37604"/>
<dbReference type="EMDB" id="EMD-37733"/>
<dbReference type="EMDB" id="EMD-37734"/>
<dbReference type="SMR" id="Q4JB49"/>
<dbReference type="STRING" id="330779.Saci_0588"/>
<dbReference type="GeneID" id="14551109"/>
<dbReference type="KEGG" id="sai:Saci_0588"/>
<dbReference type="PATRIC" id="fig|330779.12.peg.567"/>
<dbReference type="eggNOG" id="arCOG04096">
    <property type="taxonomic scope" value="Archaea"/>
</dbReference>
<dbReference type="HOGENOM" id="CLU_073626_0_3_2"/>
<dbReference type="Proteomes" id="UP000001018">
    <property type="component" value="Chromosome"/>
</dbReference>
<dbReference type="GO" id="GO:0022627">
    <property type="term" value="C:cytosolic small ribosomal subunit"/>
    <property type="evidence" value="ECO:0007669"/>
    <property type="project" value="TreeGrafter"/>
</dbReference>
<dbReference type="GO" id="GO:0019843">
    <property type="term" value="F:rRNA binding"/>
    <property type="evidence" value="ECO:0007669"/>
    <property type="project" value="UniProtKB-UniRule"/>
</dbReference>
<dbReference type="GO" id="GO:0003735">
    <property type="term" value="F:structural constituent of ribosome"/>
    <property type="evidence" value="ECO:0007669"/>
    <property type="project" value="InterPro"/>
</dbReference>
<dbReference type="GO" id="GO:0006412">
    <property type="term" value="P:translation"/>
    <property type="evidence" value="ECO:0007669"/>
    <property type="project" value="UniProtKB-UniRule"/>
</dbReference>
<dbReference type="CDD" id="cd00364">
    <property type="entry name" value="Ribosomal_uS17"/>
    <property type="match status" value="1"/>
</dbReference>
<dbReference type="Gene3D" id="2.40.50.1000">
    <property type="match status" value="1"/>
</dbReference>
<dbReference type="HAMAP" id="MF_01345_A">
    <property type="entry name" value="Ribosomal_uS17_A"/>
    <property type="match status" value="1"/>
</dbReference>
<dbReference type="InterPro" id="IPR012340">
    <property type="entry name" value="NA-bd_OB-fold"/>
</dbReference>
<dbReference type="InterPro" id="IPR000266">
    <property type="entry name" value="Ribosomal_uS17"/>
</dbReference>
<dbReference type="InterPro" id="IPR028333">
    <property type="entry name" value="Ribosomal_uS17_arc/euk"/>
</dbReference>
<dbReference type="InterPro" id="IPR019978">
    <property type="entry name" value="Ribosomal_uS17_archaeal"/>
</dbReference>
<dbReference type="NCBIfam" id="NF006345">
    <property type="entry name" value="PRK08572.1"/>
    <property type="match status" value="1"/>
</dbReference>
<dbReference type="NCBIfam" id="TIGR03630">
    <property type="entry name" value="uS17_arch"/>
    <property type="match status" value="1"/>
</dbReference>
<dbReference type="PANTHER" id="PTHR10744">
    <property type="entry name" value="40S RIBOSOMAL PROTEIN S11 FAMILY MEMBER"/>
    <property type="match status" value="1"/>
</dbReference>
<dbReference type="PANTHER" id="PTHR10744:SF9">
    <property type="entry name" value="40S RIBOSOMAL PROTEIN S11-RELATED"/>
    <property type="match status" value="1"/>
</dbReference>
<dbReference type="Pfam" id="PF00366">
    <property type="entry name" value="Ribosomal_S17"/>
    <property type="match status" value="1"/>
</dbReference>
<dbReference type="PRINTS" id="PR00973">
    <property type="entry name" value="RIBOSOMALS17"/>
</dbReference>
<dbReference type="SUPFAM" id="SSF50249">
    <property type="entry name" value="Nucleic acid-binding proteins"/>
    <property type="match status" value="1"/>
</dbReference>
<gene>
    <name evidence="1" type="primary">rps17</name>
    <name type="ordered locus">Saci_0588</name>
</gene>
<accession>Q4JB49</accession>
<proteinExistence type="evidence at protein level"/>
<name>RS17_SULAC</name>
<protein>
    <recommendedName>
        <fullName evidence="1">Small ribosomal subunit protein uS17</fullName>
    </recommendedName>
    <alternativeName>
        <fullName evidence="2">30S ribosomal protein S17</fullName>
    </alternativeName>
</protein>
<reference key="1">
    <citation type="journal article" date="2005" name="J. Bacteriol.">
        <title>The genome of Sulfolobus acidocaldarius, a model organism of the Crenarchaeota.</title>
        <authorList>
            <person name="Chen L."/>
            <person name="Bruegger K."/>
            <person name="Skovgaard M."/>
            <person name="Redder P."/>
            <person name="She Q."/>
            <person name="Torarinsson E."/>
            <person name="Greve B."/>
            <person name="Awayez M."/>
            <person name="Zibat A."/>
            <person name="Klenk H.-P."/>
            <person name="Garrett R.A."/>
        </authorList>
    </citation>
    <scope>NUCLEOTIDE SEQUENCE [LARGE SCALE GENOMIC DNA]</scope>
    <source>
        <strain>ATCC 33909 / DSM 639 / JCM 8929 / NBRC 15157 / NCIMB 11770</strain>
    </source>
</reference>
<organism>
    <name type="scientific">Sulfolobus acidocaldarius (strain ATCC 33909 / DSM 639 / JCM 8929 / NBRC 15157 / NCIMB 11770)</name>
    <dbReference type="NCBI Taxonomy" id="330779"/>
    <lineage>
        <taxon>Archaea</taxon>
        <taxon>Thermoproteota</taxon>
        <taxon>Thermoprotei</taxon>
        <taxon>Sulfolobales</taxon>
        <taxon>Sulfolobaceae</taxon>
        <taxon>Sulfolobus</taxon>
    </lineage>
</organism>
<keyword id="KW-0002">3D-structure</keyword>
<keyword id="KW-1185">Reference proteome</keyword>
<keyword id="KW-0687">Ribonucleoprotein</keyword>
<keyword id="KW-0689">Ribosomal protein</keyword>
<keyword id="KW-0694">RNA-binding</keyword>
<keyword id="KW-0699">rRNA-binding</keyword>
<comment type="function">
    <text evidence="1">One of the primary rRNA binding proteins, it binds specifically to the 5'-end of 16S ribosomal RNA.</text>
</comment>
<comment type="subunit">
    <text evidence="1">Part of the 30S ribosomal subunit.</text>
</comment>
<comment type="similarity">
    <text evidence="1">Belongs to the universal ribosomal protein uS17 family.</text>
</comment>
<evidence type="ECO:0000255" key="1">
    <source>
        <dbReference type="HAMAP-Rule" id="MF_01345"/>
    </source>
</evidence>
<evidence type="ECO:0000305" key="2"/>
<sequence>MGKKGQLVKNVGIEGVSAPSKTCDDEYCPYHGSLKVRGIVLEGKLIRARANRTGTVEREYIFYDSKYKRYERRRSRIHVHIPSCLEVKEGDNVIIGESRPIAKSISFVILGVKR</sequence>